<organism>
    <name type="scientific">Drosophila pseudoobscura pseudoobscura</name>
    <name type="common">Fruit fly</name>
    <dbReference type="NCBI Taxonomy" id="46245"/>
    <lineage>
        <taxon>Eukaryota</taxon>
        <taxon>Metazoa</taxon>
        <taxon>Ecdysozoa</taxon>
        <taxon>Arthropoda</taxon>
        <taxon>Hexapoda</taxon>
        <taxon>Insecta</taxon>
        <taxon>Pterygota</taxon>
        <taxon>Neoptera</taxon>
        <taxon>Endopterygota</taxon>
        <taxon>Diptera</taxon>
        <taxon>Brachycera</taxon>
        <taxon>Muscomorpha</taxon>
        <taxon>Ephydroidea</taxon>
        <taxon>Drosophilidae</taxon>
        <taxon>Drosophila</taxon>
        <taxon>Sophophora</taxon>
    </lineage>
</organism>
<reference evidence="8" key="1">
    <citation type="journal article" date="2005" name="Genome Res.">
        <title>Comparative genome sequencing of Drosophila pseudoobscura: chromosomal, gene, and cis-element evolution.</title>
        <authorList>
            <person name="Richards S."/>
            <person name="Liu Y."/>
            <person name="Bettencourt B.R."/>
            <person name="Hradecky P."/>
            <person name="Letovsky S."/>
            <person name="Nielsen R."/>
            <person name="Thornton K."/>
            <person name="Hubisz M.J."/>
            <person name="Chen R."/>
            <person name="Meisel R.P."/>
            <person name="Couronne O."/>
            <person name="Hua S."/>
            <person name="Smith M.A."/>
            <person name="Zhang P."/>
            <person name="Liu J."/>
            <person name="Bussemaker H.J."/>
            <person name="van Batenburg M.F."/>
            <person name="Howells S.L."/>
            <person name="Scherer S.E."/>
            <person name="Sodergren E."/>
            <person name="Matthews B.B."/>
            <person name="Crosby M.A."/>
            <person name="Schroeder A.J."/>
            <person name="Ortiz-Barrientos D."/>
            <person name="Rives C.M."/>
            <person name="Metzker M.L."/>
            <person name="Muzny D.M."/>
            <person name="Scott G."/>
            <person name="Steffen D."/>
            <person name="Wheeler D.A."/>
            <person name="Worley K.C."/>
            <person name="Havlak P."/>
            <person name="Durbin K.J."/>
            <person name="Egan A."/>
            <person name="Gill R."/>
            <person name="Hume J."/>
            <person name="Morgan M.B."/>
            <person name="Miner G."/>
            <person name="Hamilton C."/>
            <person name="Huang Y."/>
            <person name="Waldron L."/>
            <person name="Verduzco D."/>
            <person name="Clerc-Blankenburg K.P."/>
            <person name="Dubchak I."/>
            <person name="Noor M.A.F."/>
            <person name="Anderson W."/>
            <person name="White K.P."/>
            <person name="Clark A.G."/>
            <person name="Schaeffer S.W."/>
            <person name="Gelbart W.M."/>
            <person name="Weinstock G.M."/>
            <person name="Gibbs R.A."/>
        </authorList>
    </citation>
    <scope>NUCLEOTIDE SEQUENCE [LARGE SCALE GENOMIC DNA]</scope>
    <source>
        <strain>MV2-25 / Tucson 14011-0121.94</strain>
    </source>
</reference>
<protein>
    <recommendedName>
        <fullName evidence="4">Glutamate [NMDA] receptor subunit 1</fullName>
    </recommendedName>
</protein>
<dbReference type="EMBL" id="CM000070">
    <property type="protein sequence ID" value="EAL28500.1"/>
    <property type="molecule type" value="Genomic_DNA"/>
</dbReference>
<dbReference type="RefSeq" id="XP_001359355.1">
    <property type="nucleotide sequence ID" value="XM_001359318.2"/>
</dbReference>
<dbReference type="SMR" id="Q296F7"/>
<dbReference type="FunCoup" id="Q296F7">
    <property type="interactions" value="395"/>
</dbReference>
<dbReference type="STRING" id="46245.Q296F7"/>
<dbReference type="GlyCosmos" id="Q296F7">
    <property type="glycosylation" value="8 sites, No reported glycans"/>
</dbReference>
<dbReference type="EnsemblMetazoa" id="FBtr0285978">
    <property type="protein sequence ID" value="FBpp0284416"/>
    <property type="gene ID" value="FBgn0075522"/>
</dbReference>
<dbReference type="GeneID" id="4802433"/>
<dbReference type="KEGG" id="dpo:4802433"/>
<dbReference type="CTD" id="40665"/>
<dbReference type="eggNOG" id="KOG4440">
    <property type="taxonomic scope" value="Eukaryota"/>
</dbReference>
<dbReference type="HOGENOM" id="CLU_007257_2_0_1"/>
<dbReference type="InParanoid" id="Q296F7"/>
<dbReference type="OMA" id="FANNTPD"/>
<dbReference type="PhylomeDB" id="Q296F7"/>
<dbReference type="Proteomes" id="UP000001819">
    <property type="component" value="Chromosome 2"/>
</dbReference>
<dbReference type="Bgee" id="FBgn0075522">
    <property type="expression patterns" value="Expressed in insect adult head"/>
</dbReference>
<dbReference type="GO" id="GO:0017146">
    <property type="term" value="C:NMDA selective glutamate receptor complex"/>
    <property type="evidence" value="ECO:0000250"/>
    <property type="project" value="UniProtKB"/>
</dbReference>
<dbReference type="GO" id="GO:0014069">
    <property type="term" value="C:postsynaptic density"/>
    <property type="evidence" value="ECO:0007669"/>
    <property type="project" value="UniProtKB-SubCell"/>
</dbReference>
<dbReference type="GO" id="GO:0045211">
    <property type="term" value="C:postsynaptic membrane"/>
    <property type="evidence" value="ECO:0000250"/>
    <property type="project" value="UniProtKB"/>
</dbReference>
<dbReference type="GO" id="GO:0004970">
    <property type="term" value="F:glutamate-gated receptor activity"/>
    <property type="evidence" value="ECO:0000250"/>
    <property type="project" value="UniProtKB"/>
</dbReference>
<dbReference type="GO" id="GO:0055074">
    <property type="term" value="P:calcium ion homeostasis"/>
    <property type="evidence" value="ECO:0000250"/>
    <property type="project" value="UniProtKB"/>
</dbReference>
<dbReference type="GO" id="GO:0007268">
    <property type="term" value="P:chemical synaptic transmission"/>
    <property type="evidence" value="ECO:0000250"/>
    <property type="project" value="UniProtKB"/>
</dbReference>
<dbReference type="GO" id="GO:0035235">
    <property type="term" value="P:ionotropic glutamate receptor signaling pathway"/>
    <property type="evidence" value="ECO:0000250"/>
    <property type="project" value="UniProtKB"/>
</dbReference>
<dbReference type="GO" id="GO:0007616">
    <property type="term" value="P:long-term memory"/>
    <property type="evidence" value="ECO:0000250"/>
    <property type="project" value="UniProtKB"/>
</dbReference>
<dbReference type="GO" id="GO:0008355">
    <property type="term" value="P:olfactory learning"/>
    <property type="evidence" value="ECO:0000250"/>
    <property type="project" value="UniProtKB"/>
</dbReference>
<dbReference type="GO" id="GO:0042391">
    <property type="term" value="P:regulation of membrane potential"/>
    <property type="evidence" value="ECO:0000250"/>
    <property type="project" value="UniProtKB"/>
</dbReference>
<dbReference type="CDD" id="cd06379">
    <property type="entry name" value="PBP1_iGluR_NMDA_NR1"/>
    <property type="match status" value="1"/>
</dbReference>
<dbReference type="CDD" id="cd13719">
    <property type="entry name" value="PBP2_iGluR_NMDA_Nr1"/>
    <property type="match status" value="1"/>
</dbReference>
<dbReference type="FunFam" id="3.40.190.10:FF:000177">
    <property type="entry name" value="Glutamate [NMDA] receptor subunit 1"/>
    <property type="match status" value="1"/>
</dbReference>
<dbReference type="FunFam" id="3.40.50.2300:FF:000266">
    <property type="entry name" value="Glutamate [NMDA] receptor subunit 1"/>
    <property type="match status" value="1"/>
</dbReference>
<dbReference type="FunFam" id="3.40.190.10:FF:000010">
    <property type="entry name" value="glutamate receptor ionotropic, NMDA 1 isoform X1"/>
    <property type="match status" value="1"/>
</dbReference>
<dbReference type="FunFam" id="3.40.50.2300:FF:000025">
    <property type="entry name" value="glutamate receptor ionotropic, NMDA 1 isoform X1"/>
    <property type="match status" value="1"/>
</dbReference>
<dbReference type="Gene3D" id="1.10.287.70">
    <property type="match status" value="1"/>
</dbReference>
<dbReference type="Gene3D" id="3.40.50.2300">
    <property type="match status" value="2"/>
</dbReference>
<dbReference type="Gene3D" id="3.40.190.10">
    <property type="entry name" value="Periplasmic binding protein-like II"/>
    <property type="match status" value="2"/>
</dbReference>
<dbReference type="InterPro" id="IPR001828">
    <property type="entry name" value="ANF_lig-bd_rcpt"/>
</dbReference>
<dbReference type="InterPro" id="IPR018882">
    <property type="entry name" value="CaM-bd_C0_NMDA_rcpt_NR1"/>
</dbReference>
<dbReference type="InterPro" id="IPR019594">
    <property type="entry name" value="Glu/Gly-bd"/>
</dbReference>
<dbReference type="InterPro" id="IPR001508">
    <property type="entry name" value="Iono_Glu_rcpt_met"/>
</dbReference>
<dbReference type="InterPro" id="IPR015683">
    <property type="entry name" value="Ionotropic_Glu_rcpt"/>
</dbReference>
<dbReference type="InterPro" id="IPR001320">
    <property type="entry name" value="Iontro_rcpt_C"/>
</dbReference>
<dbReference type="InterPro" id="IPR049872">
    <property type="entry name" value="NMDA1-like_ligand-bd"/>
</dbReference>
<dbReference type="InterPro" id="IPR049873">
    <property type="entry name" value="NMDA1-like_N"/>
</dbReference>
<dbReference type="InterPro" id="IPR028082">
    <property type="entry name" value="Peripla_BP_I"/>
</dbReference>
<dbReference type="PANTHER" id="PTHR18966">
    <property type="entry name" value="IONOTROPIC GLUTAMATE RECEPTOR"/>
    <property type="match status" value="1"/>
</dbReference>
<dbReference type="Pfam" id="PF01094">
    <property type="entry name" value="ANF_receptor"/>
    <property type="match status" value="1"/>
</dbReference>
<dbReference type="Pfam" id="PF10562">
    <property type="entry name" value="CaM_bdg_C0"/>
    <property type="match status" value="1"/>
</dbReference>
<dbReference type="Pfam" id="PF00060">
    <property type="entry name" value="Lig_chan"/>
    <property type="match status" value="1"/>
</dbReference>
<dbReference type="Pfam" id="PF10613">
    <property type="entry name" value="Lig_chan-Glu_bd"/>
    <property type="match status" value="1"/>
</dbReference>
<dbReference type="PRINTS" id="PR00177">
    <property type="entry name" value="NMDARECEPTOR"/>
</dbReference>
<dbReference type="SMART" id="SM00918">
    <property type="entry name" value="Lig_chan-Glu_bd"/>
    <property type="match status" value="1"/>
</dbReference>
<dbReference type="SMART" id="SM00079">
    <property type="entry name" value="PBPe"/>
    <property type="match status" value="1"/>
</dbReference>
<dbReference type="SUPFAM" id="SSF53822">
    <property type="entry name" value="Periplasmic binding protein-like I"/>
    <property type="match status" value="1"/>
</dbReference>
<dbReference type="SUPFAM" id="SSF53850">
    <property type="entry name" value="Periplasmic binding protein-like II"/>
    <property type="match status" value="1"/>
</dbReference>
<dbReference type="SUPFAM" id="SSF81324">
    <property type="entry name" value="Voltage-gated potassium channels"/>
    <property type="match status" value="1"/>
</dbReference>
<sequence>MAGTDSPAAARFVYRCLLFAPAIVVGLLLPLTLPPIAAAQRHTASDNPSTYNIGGVLSNSESETYFHTIISHLNFDQQYVPRKVTYYDKTIRMDKNPIKTVFNVCDKLIENRVYAVVVSHEQTSGDLSPAAVSYTSGFYSIPVIGISSRDAAFSDKNIHVSFLRTVPPYYHQADVWLEMLSHFAYTKVIIIHSSDTDGRAILGRFQTTSQTYYDDVDVRATVELIVEFEPKLESFTEHLIDMKTAQSRVYLMYASTEDAQVIFRDAGEYNMTGEGHVWIVTEQALFANNTPDGVLGLQLEHAHSDKGHIRDSVYVLASAIKEMISNETIAEAPKDCGDSAVNWESGKRLFQYLKSRNITGETGQVAFDDNGDRIYAGYDVINIREHQKKHVVGKFSYDSMRAKMRMNINDSEIIWPGKQNRKPEGIMIPTHLKVLTIEEKPFVYVRRMGDDEFRCEPDERPCPLFNATDSTANEYCCRGYCIDLLIELSKRINFTYDLALSPDGQFGHYLLRNNTGAMTLRKEWTGLMGELVNERADMIVAPLTINPERAEYIEFSKPFKYQGITILEKKPSRSSTLVSFLQPFSNTLWILVMVSVHVVALVLYLLDRFSPFGRFKLSHSDSNEEKALNLSSAVWFAWGVLLNSGIGEGTPRSFSARVLGMVWAGFAMIIVASYTANLAAFLVLERPKTKLSGINDARLRNTMENLTCATVKGSSVDMYFRRQVELSNMYRTMEANNYATAEQAIQDVKKGKLMAFIWDSSRLEYEASKDCELVTAGELFGRSGYGVGLQKGSPWTDSVTLAILEFHESGFMEKLDKQWIFHGHVQQNCELFEKTPNTLGLKNMAGVFILVGVGIAGGVGLIIIEVIYKKHQVKKQKRLDIARHAADKWRGTIEKRKTIRASLAMQRQYNVGLNSTHPPGTISLAVDKRRYPRLGQRLGPERAWPGDAADVLRTRRPYELGKPGQSPKVMVATPAMLGRTRPQQNILPPRYSPGYTSDVSHLVV</sequence>
<proteinExistence type="inferred from homology"/>
<comment type="function">
    <text evidence="2 4">NMDA receptor subtype of glutamate-gated ion channels with high calcium permeability and voltage-dependent sensitivity to magnesium. Mediated by glycine. This protein plays a key role in synaptic plasticity, synaptogenesis, excitotoxicity, memory acquisition and learning. It mediates neuronal functions in glutamate neurotransmission. Is involved in the cell surface targeting of NMDA receptors. Plays a role in associative learning and in long-term memory consolidation (By similarity).</text>
</comment>
<comment type="subunit">
    <text evidence="1">Forms a heteromeric NMDA channel with Nmdar2.</text>
</comment>
<comment type="subcellular location">
    <subcellularLocation>
        <location evidence="4">Cell membrane</location>
        <topology evidence="4">Multi-pass membrane protein</topology>
    </subcellularLocation>
    <subcellularLocation>
        <location evidence="4">Postsynaptic cell membrane</location>
    </subcellularLocation>
    <subcellularLocation>
        <location evidence="4">Postsynaptic density</location>
    </subcellularLocation>
</comment>
<comment type="similarity">
    <text evidence="7">Belongs to the glutamate-gated ion channel (TC 1.A.10.1) family.</text>
</comment>
<feature type="signal peptide" evidence="5">
    <location>
        <begin position="1"/>
        <end position="39"/>
    </location>
</feature>
<feature type="chain" id="PRO_0000363999" description="Glutamate [NMDA] receptor subunit 1" evidence="5">
    <location>
        <begin position="40"/>
        <end position="1004"/>
    </location>
</feature>
<feature type="topological domain" description="Extracellular" evidence="5">
    <location>
        <begin position="40"/>
        <end position="585"/>
    </location>
</feature>
<feature type="transmembrane region" description="Helical" evidence="5">
    <location>
        <begin position="586"/>
        <end position="606"/>
    </location>
</feature>
<feature type="topological domain" description="Cytoplasmic" evidence="5">
    <location>
        <begin position="607"/>
        <end position="663"/>
    </location>
</feature>
<feature type="transmembrane region" description="Helical" evidence="5">
    <location>
        <begin position="664"/>
        <end position="684"/>
    </location>
</feature>
<feature type="topological domain" description="Extracellular" evidence="5">
    <location>
        <begin position="685"/>
        <end position="843"/>
    </location>
</feature>
<feature type="transmembrane region" description="Helical" evidence="5">
    <location>
        <begin position="844"/>
        <end position="864"/>
    </location>
</feature>
<feature type="topological domain" description="Cytoplasmic" evidence="5">
    <location>
        <begin position="865"/>
        <end position="1004"/>
    </location>
</feature>
<feature type="region of interest" description="Disordered" evidence="6">
    <location>
        <begin position="980"/>
        <end position="1004"/>
    </location>
</feature>
<feature type="compositionally biased region" description="Polar residues" evidence="6">
    <location>
        <begin position="994"/>
        <end position="1004"/>
    </location>
</feature>
<feature type="binding site" evidence="2">
    <location>
        <begin position="542"/>
        <end position="544"/>
    </location>
    <ligand>
        <name>glycine</name>
        <dbReference type="ChEBI" id="CHEBI:57305"/>
    </ligand>
</feature>
<feature type="binding site" evidence="2">
    <location>
        <position position="549"/>
    </location>
    <ligand>
        <name>glycine</name>
        <dbReference type="ChEBI" id="CHEBI:57305"/>
    </ligand>
</feature>
<feature type="binding site" evidence="2">
    <location>
        <position position="715"/>
    </location>
    <ligand>
        <name>glycine</name>
        <dbReference type="ChEBI" id="CHEBI:57305"/>
    </ligand>
</feature>
<feature type="binding site" evidence="2">
    <location>
        <position position="759"/>
    </location>
    <ligand>
        <name>glycine</name>
        <dbReference type="ChEBI" id="CHEBI:57305"/>
    </ligand>
</feature>
<feature type="glycosylation site" description="N-linked (GlcNAc...) asparagine" evidence="5">
    <location>
        <position position="270"/>
    </location>
</feature>
<feature type="glycosylation site" description="N-linked (GlcNAc...) asparagine" evidence="5">
    <location>
        <position position="326"/>
    </location>
</feature>
<feature type="glycosylation site" description="N-linked (GlcNAc...) asparagine" evidence="5">
    <location>
        <position position="357"/>
    </location>
</feature>
<feature type="glycosylation site" description="N-linked (GlcNAc...) asparagine" evidence="5">
    <location>
        <position position="409"/>
    </location>
</feature>
<feature type="glycosylation site" description="N-linked (GlcNAc...) asparagine" evidence="5">
    <location>
        <position position="466"/>
    </location>
</feature>
<feature type="glycosylation site" description="N-linked (GlcNAc...) asparagine" evidence="5">
    <location>
        <position position="493"/>
    </location>
</feature>
<feature type="glycosylation site" description="N-linked (GlcNAc...) asparagine" evidence="5">
    <location>
        <position position="513"/>
    </location>
</feature>
<feature type="glycosylation site" description="N-linked (GlcNAc...) asparagine" evidence="5">
    <location>
        <position position="705"/>
    </location>
</feature>
<feature type="disulfide bond" description="Interchain" evidence="3">
    <location>
        <position position="105"/>
    </location>
</feature>
<gene>
    <name evidence="4" type="primary">Nmdar1</name>
    <name type="ORF">GA15505</name>
</gene>
<evidence type="ECO:0000250" key="1"/>
<evidence type="ECO:0000250" key="2">
    <source>
        <dbReference type="UniProtKB" id="P35439"/>
    </source>
</evidence>
<evidence type="ECO:0000250" key="3">
    <source>
        <dbReference type="UniProtKB" id="Q05586"/>
    </source>
</evidence>
<evidence type="ECO:0000250" key="4">
    <source>
        <dbReference type="UniProtKB" id="Q24418"/>
    </source>
</evidence>
<evidence type="ECO:0000255" key="5"/>
<evidence type="ECO:0000256" key="6">
    <source>
        <dbReference type="SAM" id="MobiDB-lite"/>
    </source>
</evidence>
<evidence type="ECO:0000305" key="7"/>
<evidence type="ECO:0000312" key="8">
    <source>
        <dbReference type="EMBL" id="EAL28500.1"/>
    </source>
</evidence>
<name>NMDA1_DROPS</name>
<accession>Q296F7</accession>
<keyword id="KW-0106">Calcium</keyword>
<keyword id="KW-1003">Cell membrane</keyword>
<keyword id="KW-1015">Disulfide bond</keyword>
<keyword id="KW-0325">Glycoprotein</keyword>
<keyword id="KW-0407">Ion channel</keyword>
<keyword id="KW-0406">Ion transport</keyword>
<keyword id="KW-1071">Ligand-gated ion channel</keyword>
<keyword id="KW-0460">Magnesium</keyword>
<keyword id="KW-0472">Membrane</keyword>
<keyword id="KW-0597">Phosphoprotein</keyword>
<keyword id="KW-0628">Postsynaptic cell membrane</keyword>
<keyword id="KW-0675">Receptor</keyword>
<keyword id="KW-1185">Reference proteome</keyword>
<keyword id="KW-0732">Signal</keyword>
<keyword id="KW-0770">Synapse</keyword>
<keyword id="KW-0812">Transmembrane</keyword>
<keyword id="KW-1133">Transmembrane helix</keyword>
<keyword id="KW-0813">Transport</keyword>